<protein>
    <recommendedName>
        <fullName evidence="1">Histidinol-phosphate aminotransferase</fullName>
        <ecNumber evidence="1">2.6.1.9</ecNumber>
    </recommendedName>
    <alternativeName>
        <fullName evidence="1">Imidazole acetol-phosphate transaminase</fullName>
    </alternativeName>
</protein>
<proteinExistence type="inferred from homology"/>
<name>HIS8_SHIF8</name>
<sequence length="356" mass="39361">MSTVTITDLARENVRNLTPYQSARRLGGNGDVWLNANEYPTAVEFKLTQQTLNRYPECQPKAVIENYAQYAGVKPEQVLVSRGADEGIELLIRAFCEPGKDAILYCPPTYGMYSVSAETIGVECRTVPTLENWQLDLQGISDKLDGVKVVYVCSPNNPTGQLINPQDFRTLLELTRGKAIVVADEAYIEFCPQASLAGWLAEYPHLAILRTLSKAFALAGLRCGFTLANEEVINLLMKVIPPYPLSTPVADIAAQALSPQGIVAMSERVAQIITEREYLIAALKEIPCVEQVFDSETNYILARFKASSAVFKSLWDQGIILRDQNKQPSLSGCLRITVGTREESQRVIDALRAEQV</sequence>
<comment type="catalytic activity">
    <reaction evidence="1">
        <text>L-histidinol phosphate + 2-oxoglutarate = 3-(imidazol-4-yl)-2-oxopropyl phosphate + L-glutamate</text>
        <dbReference type="Rhea" id="RHEA:23744"/>
        <dbReference type="ChEBI" id="CHEBI:16810"/>
        <dbReference type="ChEBI" id="CHEBI:29985"/>
        <dbReference type="ChEBI" id="CHEBI:57766"/>
        <dbReference type="ChEBI" id="CHEBI:57980"/>
        <dbReference type="EC" id="2.6.1.9"/>
    </reaction>
</comment>
<comment type="cofactor">
    <cofactor evidence="1">
        <name>pyridoxal 5'-phosphate</name>
        <dbReference type="ChEBI" id="CHEBI:597326"/>
    </cofactor>
</comment>
<comment type="pathway">
    <text evidence="1">Amino-acid biosynthesis; L-histidine biosynthesis; L-histidine from 5-phospho-alpha-D-ribose 1-diphosphate: step 7/9.</text>
</comment>
<comment type="subunit">
    <text evidence="1">Homodimer.</text>
</comment>
<comment type="similarity">
    <text evidence="1">Belongs to the class-II pyridoxal-phosphate-dependent aminotransferase family. Histidinol-phosphate aminotransferase subfamily.</text>
</comment>
<reference key="1">
    <citation type="journal article" date="2006" name="BMC Genomics">
        <title>Complete genome sequence of Shigella flexneri 5b and comparison with Shigella flexneri 2a.</title>
        <authorList>
            <person name="Nie H."/>
            <person name="Yang F."/>
            <person name="Zhang X."/>
            <person name="Yang J."/>
            <person name="Chen L."/>
            <person name="Wang J."/>
            <person name="Xiong Z."/>
            <person name="Peng J."/>
            <person name="Sun L."/>
            <person name="Dong J."/>
            <person name="Xue Y."/>
            <person name="Xu X."/>
            <person name="Chen S."/>
            <person name="Yao Z."/>
            <person name="Shen Y."/>
            <person name="Jin Q."/>
        </authorList>
    </citation>
    <scope>NUCLEOTIDE SEQUENCE [LARGE SCALE GENOMIC DNA]</scope>
    <source>
        <strain>8401</strain>
    </source>
</reference>
<evidence type="ECO:0000255" key="1">
    <source>
        <dbReference type="HAMAP-Rule" id="MF_01023"/>
    </source>
</evidence>
<keyword id="KW-0028">Amino-acid biosynthesis</keyword>
<keyword id="KW-0032">Aminotransferase</keyword>
<keyword id="KW-0368">Histidine biosynthesis</keyword>
<keyword id="KW-0663">Pyridoxal phosphate</keyword>
<keyword id="KW-0808">Transferase</keyword>
<accession>Q0T3A6</accession>
<dbReference type="EC" id="2.6.1.9" evidence="1"/>
<dbReference type="EMBL" id="CP000266">
    <property type="protein sequence ID" value="ABF04209.1"/>
    <property type="molecule type" value="Genomic_DNA"/>
</dbReference>
<dbReference type="RefSeq" id="WP_000108918.1">
    <property type="nucleotide sequence ID" value="NC_008258.1"/>
</dbReference>
<dbReference type="SMR" id="Q0T3A6"/>
<dbReference type="KEGG" id="sfv:SFV_2081"/>
<dbReference type="HOGENOM" id="CLU_017584_3_1_6"/>
<dbReference type="UniPathway" id="UPA00031">
    <property type="reaction ID" value="UER00012"/>
</dbReference>
<dbReference type="Proteomes" id="UP000000659">
    <property type="component" value="Chromosome"/>
</dbReference>
<dbReference type="GO" id="GO:0004400">
    <property type="term" value="F:histidinol-phosphate transaminase activity"/>
    <property type="evidence" value="ECO:0007669"/>
    <property type="project" value="UniProtKB-UniRule"/>
</dbReference>
<dbReference type="GO" id="GO:0030170">
    <property type="term" value="F:pyridoxal phosphate binding"/>
    <property type="evidence" value="ECO:0007669"/>
    <property type="project" value="InterPro"/>
</dbReference>
<dbReference type="GO" id="GO:0000105">
    <property type="term" value="P:L-histidine biosynthetic process"/>
    <property type="evidence" value="ECO:0007669"/>
    <property type="project" value="UniProtKB-UniRule"/>
</dbReference>
<dbReference type="CDD" id="cd00609">
    <property type="entry name" value="AAT_like"/>
    <property type="match status" value="1"/>
</dbReference>
<dbReference type="FunFam" id="3.40.640.10:FF:000032">
    <property type="entry name" value="Histidinol-phosphate aminotransferase"/>
    <property type="match status" value="1"/>
</dbReference>
<dbReference type="FunFam" id="3.90.1150.10:FF:000042">
    <property type="entry name" value="Histidinol-phosphate aminotransferase"/>
    <property type="match status" value="1"/>
</dbReference>
<dbReference type="Gene3D" id="3.90.1150.10">
    <property type="entry name" value="Aspartate Aminotransferase, domain 1"/>
    <property type="match status" value="1"/>
</dbReference>
<dbReference type="Gene3D" id="3.40.640.10">
    <property type="entry name" value="Type I PLP-dependent aspartate aminotransferase-like (Major domain)"/>
    <property type="match status" value="1"/>
</dbReference>
<dbReference type="HAMAP" id="MF_01023">
    <property type="entry name" value="HisC_aminotrans_2"/>
    <property type="match status" value="1"/>
</dbReference>
<dbReference type="InterPro" id="IPR001917">
    <property type="entry name" value="Aminotrans_II_pyridoxalP_BS"/>
</dbReference>
<dbReference type="InterPro" id="IPR004839">
    <property type="entry name" value="Aminotransferase_I/II_large"/>
</dbReference>
<dbReference type="InterPro" id="IPR005861">
    <property type="entry name" value="HisP_aminotrans"/>
</dbReference>
<dbReference type="InterPro" id="IPR015424">
    <property type="entry name" value="PyrdxlP-dep_Trfase"/>
</dbReference>
<dbReference type="InterPro" id="IPR015421">
    <property type="entry name" value="PyrdxlP-dep_Trfase_major"/>
</dbReference>
<dbReference type="InterPro" id="IPR015422">
    <property type="entry name" value="PyrdxlP-dep_Trfase_small"/>
</dbReference>
<dbReference type="NCBIfam" id="TIGR01141">
    <property type="entry name" value="hisC"/>
    <property type="match status" value="1"/>
</dbReference>
<dbReference type="PANTHER" id="PTHR42885:SF2">
    <property type="entry name" value="HISTIDINOL-PHOSPHATE AMINOTRANSFERASE"/>
    <property type="match status" value="1"/>
</dbReference>
<dbReference type="PANTHER" id="PTHR42885">
    <property type="entry name" value="HISTIDINOL-PHOSPHATE AMINOTRANSFERASE-RELATED"/>
    <property type="match status" value="1"/>
</dbReference>
<dbReference type="Pfam" id="PF00155">
    <property type="entry name" value="Aminotran_1_2"/>
    <property type="match status" value="1"/>
</dbReference>
<dbReference type="SUPFAM" id="SSF53383">
    <property type="entry name" value="PLP-dependent transferases"/>
    <property type="match status" value="1"/>
</dbReference>
<dbReference type="PROSITE" id="PS00599">
    <property type="entry name" value="AA_TRANSFER_CLASS_2"/>
    <property type="match status" value="1"/>
</dbReference>
<organism>
    <name type="scientific">Shigella flexneri serotype 5b (strain 8401)</name>
    <dbReference type="NCBI Taxonomy" id="373384"/>
    <lineage>
        <taxon>Bacteria</taxon>
        <taxon>Pseudomonadati</taxon>
        <taxon>Pseudomonadota</taxon>
        <taxon>Gammaproteobacteria</taxon>
        <taxon>Enterobacterales</taxon>
        <taxon>Enterobacteriaceae</taxon>
        <taxon>Shigella</taxon>
    </lineage>
</organism>
<gene>
    <name evidence="1" type="primary">hisC</name>
    <name type="ordered locus">SFV_2081</name>
</gene>
<feature type="chain" id="PRO_1000063500" description="Histidinol-phosphate aminotransferase">
    <location>
        <begin position="1"/>
        <end position="356"/>
    </location>
</feature>
<feature type="modified residue" description="N6-(pyridoxal phosphate)lysine" evidence="1">
    <location>
        <position position="214"/>
    </location>
</feature>